<protein>
    <recommendedName>
        <fullName evidence="1">Large ribosomal subunit protein eL42</fullName>
    </recommendedName>
</protein>
<organism>
    <name type="scientific">Thermococcus kodakarensis (strain ATCC BAA-918 / JCM 12380 / KOD1)</name>
    <name type="common">Pyrococcus kodakaraensis (strain KOD1)</name>
    <dbReference type="NCBI Taxonomy" id="69014"/>
    <lineage>
        <taxon>Archaea</taxon>
        <taxon>Methanobacteriati</taxon>
        <taxon>Methanobacteriota</taxon>
        <taxon>Thermococci</taxon>
        <taxon>Thermococcales</taxon>
        <taxon>Thermococcaceae</taxon>
        <taxon>Thermococcus</taxon>
    </lineage>
</organism>
<feature type="chain" id="PRO_0000461764" description="Large ribosomal subunit protein eL42">
    <location>
        <begin position="1"/>
        <end position="94"/>
    </location>
</feature>
<feature type="zinc finger region" description="C4-type" evidence="1">
    <location>
        <begin position="11"/>
        <end position="74"/>
    </location>
</feature>
<feature type="binding site" evidence="1 4 5 6">
    <location>
        <position position="11"/>
    </location>
    <ligand>
        <name>Zn(2+)</name>
        <dbReference type="ChEBI" id="CHEBI:29105"/>
    </ligand>
</feature>
<feature type="binding site" evidence="1 4 5 6">
    <location>
        <position position="14"/>
    </location>
    <ligand>
        <name>Zn(2+)</name>
        <dbReference type="ChEBI" id="CHEBI:29105"/>
    </ligand>
</feature>
<feature type="binding site" evidence="1 4 5 6">
    <location>
        <position position="71"/>
    </location>
    <ligand>
        <name>Zn(2+)</name>
        <dbReference type="ChEBI" id="CHEBI:29105"/>
    </ligand>
</feature>
<feature type="binding site" evidence="1 4 5 6">
    <location>
        <position position="74"/>
    </location>
    <ligand>
        <name>Zn(2+)</name>
        <dbReference type="ChEBI" id="CHEBI:29105"/>
    </ligand>
</feature>
<keyword id="KW-0002">3D-structure</keyword>
<keyword id="KW-0479">Metal-binding</keyword>
<keyword id="KW-1185">Reference proteome</keyword>
<keyword id="KW-0687">Ribonucleoprotein</keyword>
<keyword id="KW-0689">Ribosomal protein</keyword>
<keyword id="KW-0694">RNA-binding</keyword>
<keyword id="KW-0699">rRNA-binding</keyword>
<keyword id="KW-0862">Zinc</keyword>
<keyword id="KW-0863">Zinc-finger</keyword>
<comment type="function">
    <text evidence="1">Binds to the 23S rRNA.</text>
</comment>
<comment type="cofactor">
    <cofactor evidence="1 4 5 6">
        <name>Zn(2+)</name>
        <dbReference type="ChEBI" id="CHEBI:29105"/>
    </cofactor>
    <text evidence="1 4 5 6">Binds 1 zinc ion per subunit.</text>
</comment>
<comment type="subunit">
    <text evidence="1 2">Part of the 50S ribosomal subunit.</text>
</comment>
<comment type="similarity">
    <text evidence="1">Belongs to the eukaryotic ribosomal protein eL42 family.</text>
</comment>
<reference evidence="3" key="1">
    <citation type="journal article" date="2005" name="Genome Res.">
        <title>Complete genome sequence of the hyperthermophilic archaeon Thermococcus kodakaraensis KOD1 and comparison with Pyrococcus genomes.</title>
        <authorList>
            <person name="Fukui T."/>
            <person name="Atomi H."/>
            <person name="Kanai T."/>
            <person name="Matsumi R."/>
            <person name="Fujiwara S."/>
            <person name="Imanaka T."/>
        </authorList>
    </citation>
    <scope>NUCLEOTIDE SEQUENCE [LARGE SCALE GENOMIC DNA]</scope>
    <source>
        <strain>ATCC BAA-918 / JCM 12380 / KOD1</strain>
    </source>
</reference>
<reference evidence="4 5 6" key="2">
    <citation type="journal article" date="2020" name="Nature">
        <title>Dynamic RNA acetylation revealed by quantitative cross-evolutionary mapping.</title>
        <authorList>
            <person name="Sas-Chen A."/>
            <person name="Thomas J.M."/>
            <person name="Matzov D."/>
            <person name="Taoka M."/>
            <person name="Nance K.D."/>
            <person name="Nir R."/>
            <person name="Bryson K.M."/>
            <person name="Shachar R."/>
            <person name="Liman G.L.S."/>
            <person name="Burkhart B.W."/>
            <person name="Gamage S.T."/>
            <person name="Nobe Y."/>
            <person name="Briney C.A."/>
            <person name="Levy M.J."/>
            <person name="Fuchs R.T."/>
            <person name="Robb G.B."/>
            <person name="Hartmann J."/>
            <person name="Sharma S."/>
            <person name="Lin Q."/>
            <person name="Florens L."/>
            <person name="Washburn M.P."/>
            <person name="Isobe T."/>
            <person name="Santangelo T.J."/>
            <person name="Shalev-Benami M."/>
            <person name="Meier J.L."/>
            <person name="Schwartz S."/>
        </authorList>
    </citation>
    <scope>STRUCTURE BY ELECTRON MICROSCOPY (2.55 ANGSTROMS) IN 70S RIBOSOME IN COMPLEX WITH ZN(2+)</scope>
    <scope>COFACTOR</scope>
    <scope>SUBUNIT</scope>
    <source>
        <strain>ATCC BAA-918 / TS559</strain>
    </source>
</reference>
<proteinExistence type="evidence at protein level"/>
<accession>Q5JE51</accession>
<evidence type="ECO:0000255" key="1">
    <source>
        <dbReference type="HAMAP-Rule" id="MF_01476"/>
    </source>
</evidence>
<evidence type="ECO:0000269" key="2">
    <source>
    </source>
</evidence>
<evidence type="ECO:0000312" key="3">
    <source>
        <dbReference type="EMBL" id="BAD85287.1"/>
    </source>
</evidence>
<evidence type="ECO:0007744" key="4">
    <source>
        <dbReference type="PDB" id="6SKF"/>
    </source>
</evidence>
<evidence type="ECO:0007744" key="5">
    <source>
        <dbReference type="PDB" id="6SKG"/>
    </source>
</evidence>
<evidence type="ECO:0007744" key="6">
    <source>
        <dbReference type="PDB" id="6TH6"/>
    </source>
</evidence>
<sequence>MKYPKQIRTYCPFCKRHTIHKVEKVKKRPRSELSAGQRRFRRKLKGYTGFPRPNPAGREKPVKKLDLRFRCTVCGKAHTRGQGFRVKKFELVEV</sequence>
<gene>
    <name evidence="1" type="primary">rpl44e</name>
    <name evidence="3" type="ordered locus">TK1098</name>
</gene>
<name>RL44E_THEKO</name>
<dbReference type="EMBL" id="AP006878">
    <property type="protein sequence ID" value="BAD85287.1"/>
    <property type="molecule type" value="Genomic_DNA"/>
</dbReference>
<dbReference type="RefSeq" id="WP_011250049.1">
    <property type="nucleotide sequence ID" value="NC_006624.1"/>
</dbReference>
<dbReference type="PDB" id="6SKF">
    <property type="method" value="EM"/>
    <property type="resolution" value="2.95 A"/>
    <property type="chains" value="Bl=1-94"/>
</dbReference>
<dbReference type="PDB" id="6SKG">
    <property type="method" value="EM"/>
    <property type="resolution" value="2.65 A"/>
    <property type="chains" value="Bl=1-94"/>
</dbReference>
<dbReference type="PDB" id="6TH6">
    <property type="method" value="EM"/>
    <property type="resolution" value="2.55 A"/>
    <property type="chains" value="Bl=1-94"/>
</dbReference>
<dbReference type="PDBsum" id="6SKF"/>
<dbReference type="PDBsum" id="6SKG"/>
<dbReference type="PDBsum" id="6TH6"/>
<dbReference type="EMDB" id="EMD-10223"/>
<dbReference type="EMDB" id="EMD-10224"/>
<dbReference type="EMDB" id="EMD-10503"/>
<dbReference type="FunCoup" id="Q5JE51">
    <property type="interactions" value="139"/>
</dbReference>
<dbReference type="STRING" id="69014.TK1098"/>
<dbReference type="EnsemblBacteria" id="BAD85287">
    <property type="protein sequence ID" value="BAD85287"/>
    <property type="gene ID" value="TK1098"/>
</dbReference>
<dbReference type="GeneID" id="78447611"/>
<dbReference type="KEGG" id="tko:TK1098"/>
<dbReference type="PATRIC" id="fig|69014.16.peg.1074"/>
<dbReference type="eggNOG" id="arCOG04109">
    <property type="taxonomic scope" value="Archaea"/>
</dbReference>
<dbReference type="HOGENOM" id="CLU_114645_3_0_2"/>
<dbReference type="InParanoid" id="Q5JE51"/>
<dbReference type="OrthoDB" id="52456at2157"/>
<dbReference type="PhylomeDB" id="Q5JE51"/>
<dbReference type="Proteomes" id="UP000000536">
    <property type="component" value="Chromosome"/>
</dbReference>
<dbReference type="GO" id="GO:0022625">
    <property type="term" value="C:cytosolic large ribosomal subunit"/>
    <property type="evidence" value="ECO:0000318"/>
    <property type="project" value="GO_Central"/>
</dbReference>
<dbReference type="GO" id="GO:0070180">
    <property type="term" value="F:large ribosomal subunit rRNA binding"/>
    <property type="evidence" value="ECO:0007669"/>
    <property type="project" value="UniProtKB-UniRule"/>
</dbReference>
<dbReference type="GO" id="GO:0003735">
    <property type="term" value="F:structural constituent of ribosome"/>
    <property type="evidence" value="ECO:0007669"/>
    <property type="project" value="InterPro"/>
</dbReference>
<dbReference type="GO" id="GO:0008270">
    <property type="term" value="F:zinc ion binding"/>
    <property type="evidence" value="ECO:0007669"/>
    <property type="project" value="UniProtKB-UniRule"/>
</dbReference>
<dbReference type="GO" id="GO:0006412">
    <property type="term" value="P:translation"/>
    <property type="evidence" value="ECO:0007669"/>
    <property type="project" value="UniProtKB-UniRule"/>
</dbReference>
<dbReference type="FunFam" id="3.10.450.80:FF:000001">
    <property type="entry name" value="60S ribosomal protein L44"/>
    <property type="match status" value="1"/>
</dbReference>
<dbReference type="Gene3D" id="3.10.450.80">
    <property type="match status" value="1"/>
</dbReference>
<dbReference type="HAMAP" id="MF_01476">
    <property type="entry name" value="Ribosomal_L44e"/>
    <property type="match status" value="1"/>
</dbReference>
<dbReference type="InterPro" id="IPR000552">
    <property type="entry name" value="Ribosomal_eL44"/>
</dbReference>
<dbReference type="InterPro" id="IPR053708">
    <property type="entry name" value="Ribosomal_LSU_eL42"/>
</dbReference>
<dbReference type="InterPro" id="IPR011332">
    <property type="entry name" value="Ribosomal_zn-bd"/>
</dbReference>
<dbReference type="NCBIfam" id="NF004425">
    <property type="entry name" value="PRK05767.1"/>
    <property type="match status" value="1"/>
</dbReference>
<dbReference type="PANTHER" id="PTHR10369">
    <property type="entry name" value="60S RIBOSOMAL PROTEIN L36A/L44"/>
    <property type="match status" value="1"/>
</dbReference>
<dbReference type="Pfam" id="PF00935">
    <property type="entry name" value="Ribosomal_L44"/>
    <property type="match status" value="1"/>
</dbReference>
<dbReference type="SUPFAM" id="SSF57829">
    <property type="entry name" value="Zn-binding ribosomal proteins"/>
    <property type="match status" value="1"/>
</dbReference>
<dbReference type="PROSITE" id="PS01172">
    <property type="entry name" value="RIBOSOMAL_L44E"/>
    <property type="match status" value="1"/>
</dbReference>